<name>IXTPA_SYNS3</name>
<comment type="function">
    <text evidence="1">Pyrophosphatase that catalyzes the hydrolysis of nucleoside triphosphates to their monophosphate derivatives, with a high preference for the non-canonical purine nucleotides XTP (xanthosine triphosphate), dITP (deoxyinosine triphosphate) and ITP. Seems to function as a house-cleaning enzyme that removes non-canonical purine nucleotides from the nucleotide pool, thus preventing their incorporation into DNA/RNA and avoiding chromosomal lesions.</text>
</comment>
<comment type="catalytic activity">
    <reaction evidence="1">
        <text>XTP + H2O = XMP + diphosphate + H(+)</text>
        <dbReference type="Rhea" id="RHEA:28610"/>
        <dbReference type="ChEBI" id="CHEBI:15377"/>
        <dbReference type="ChEBI" id="CHEBI:15378"/>
        <dbReference type="ChEBI" id="CHEBI:33019"/>
        <dbReference type="ChEBI" id="CHEBI:57464"/>
        <dbReference type="ChEBI" id="CHEBI:61314"/>
        <dbReference type="EC" id="3.6.1.66"/>
    </reaction>
</comment>
<comment type="catalytic activity">
    <reaction evidence="1">
        <text>dITP + H2O = dIMP + diphosphate + H(+)</text>
        <dbReference type="Rhea" id="RHEA:28342"/>
        <dbReference type="ChEBI" id="CHEBI:15377"/>
        <dbReference type="ChEBI" id="CHEBI:15378"/>
        <dbReference type="ChEBI" id="CHEBI:33019"/>
        <dbReference type="ChEBI" id="CHEBI:61194"/>
        <dbReference type="ChEBI" id="CHEBI:61382"/>
        <dbReference type="EC" id="3.6.1.66"/>
    </reaction>
</comment>
<comment type="catalytic activity">
    <reaction evidence="1">
        <text>ITP + H2O = IMP + diphosphate + H(+)</text>
        <dbReference type="Rhea" id="RHEA:29399"/>
        <dbReference type="ChEBI" id="CHEBI:15377"/>
        <dbReference type="ChEBI" id="CHEBI:15378"/>
        <dbReference type="ChEBI" id="CHEBI:33019"/>
        <dbReference type="ChEBI" id="CHEBI:58053"/>
        <dbReference type="ChEBI" id="CHEBI:61402"/>
        <dbReference type="EC" id="3.6.1.66"/>
    </reaction>
</comment>
<comment type="cofactor">
    <cofactor evidence="1">
        <name>Mg(2+)</name>
        <dbReference type="ChEBI" id="CHEBI:18420"/>
    </cofactor>
    <text evidence="1">Binds 1 Mg(2+) ion per subunit.</text>
</comment>
<comment type="subunit">
    <text evidence="1">Homodimer.</text>
</comment>
<comment type="similarity">
    <text evidence="1">Belongs to the HAM1 NTPase family.</text>
</comment>
<accession>Q0IDG4</accession>
<dbReference type="EC" id="3.6.1.66" evidence="1"/>
<dbReference type="EMBL" id="CP000435">
    <property type="protein sequence ID" value="ABI45643.1"/>
    <property type="molecule type" value="Genomic_DNA"/>
</dbReference>
<dbReference type="RefSeq" id="WP_011618253.1">
    <property type="nucleotide sequence ID" value="NC_008319.1"/>
</dbReference>
<dbReference type="SMR" id="Q0IDG4"/>
<dbReference type="STRING" id="64471.sync_0272"/>
<dbReference type="KEGG" id="syg:sync_0272"/>
<dbReference type="eggNOG" id="COG0127">
    <property type="taxonomic scope" value="Bacteria"/>
</dbReference>
<dbReference type="HOGENOM" id="CLU_082080_0_2_3"/>
<dbReference type="OrthoDB" id="9807456at2"/>
<dbReference type="Proteomes" id="UP000001961">
    <property type="component" value="Chromosome"/>
</dbReference>
<dbReference type="GO" id="GO:0005829">
    <property type="term" value="C:cytosol"/>
    <property type="evidence" value="ECO:0007669"/>
    <property type="project" value="TreeGrafter"/>
</dbReference>
<dbReference type="GO" id="GO:0035870">
    <property type="term" value="F:dITP diphosphatase activity"/>
    <property type="evidence" value="ECO:0007669"/>
    <property type="project" value="RHEA"/>
</dbReference>
<dbReference type="GO" id="GO:0036220">
    <property type="term" value="F:ITP diphosphatase activity"/>
    <property type="evidence" value="ECO:0007669"/>
    <property type="project" value="UniProtKB-EC"/>
</dbReference>
<dbReference type="GO" id="GO:0046872">
    <property type="term" value="F:metal ion binding"/>
    <property type="evidence" value="ECO:0007669"/>
    <property type="project" value="UniProtKB-KW"/>
</dbReference>
<dbReference type="GO" id="GO:0000166">
    <property type="term" value="F:nucleotide binding"/>
    <property type="evidence" value="ECO:0007669"/>
    <property type="project" value="UniProtKB-KW"/>
</dbReference>
<dbReference type="GO" id="GO:0017111">
    <property type="term" value="F:ribonucleoside triphosphate phosphatase activity"/>
    <property type="evidence" value="ECO:0007669"/>
    <property type="project" value="InterPro"/>
</dbReference>
<dbReference type="GO" id="GO:0036222">
    <property type="term" value="F:XTP diphosphatase activity"/>
    <property type="evidence" value="ECO:0007669"/>
    <property type="project" value="RHEA"/>
</dbReference>
<dbReference type="GO" id="GO:0009117">
    <property type="term" value="P:nucleotide metabolic process"/>
    <property type="evidence" value="ECO:0007669"/>
    <property type="project" value="UniProtKB-KW"/>
</dbReference>
<dbReference type="GO" id="GO:0009146">
    <property type="term" value="P:purine nucleoside triphosphate catabolic process"/>
    <property type="evidence" value="ECO:0007669"/>
    <property type="project" value="UniProtKB-UniRule"/>
</dbReference>
<dbReference type="CDD" id="cd00515">
    <property type="entry name" value="HAM1"/>
    <property type="match status" value="1"/>
</dbReference>
<dbReference type="FunFam" id="3.90.950.10:FF:000001">
    <property type="entry name" value="dITP/XTP pyrophosphatase"/>
    <property type="match status" value="1"/>
</dbReference>
<dbReference type="Gene3D" id="3.90.950.10">
    <property type="match status" value="1"/>
</dbReference>
<dbReference type="HAMAP" id="MF_01405">
    <property type="entry name" value="Non_canon_purine_NTPase"/>
    <property type="match status" value="1"/>
</dbReference>
<dbReference type="InterPro" id="IPR020922">
    <property type="entry name" value="dITP/XTP_pyrophosphatase"/>
</dbReference>
<dbReference type="InterPro" id="IPR029001">
    <property type="entry name" value="ITPase-like_fam"/>
</dbReference>
<dbReference type="InterPro" id="IPR002637">
    <property type="entry name" value="RdgB/HAM1"/>
</dbReference>
<dbReference type="NCBIfam" id="TIGR00042">
    <property type="entry name" value="RdgB/HAM1 family non-canonical purine NTP pyrophosphatase"/>
    <property type="match status" value="1"/>
</dbReference>
<dbReference type="PANTHER" id="PTHR11067:SF9">
    <property type="entry name" value="INOSINE TRIPHOSPHATE PYROPHOSPHATASE"/>
    <property type="match status" value="1"/>
</dbReference>
<dbReference type="PANTHER" id="PTHR11067">
    <property type="entry name" value="INOSINE TRIPHOSPHATE PYROPHOSPHATASE/HAM1 PROTEIN"/>
    <property type="match status" value="1"/>
</dbReference>
<dbReference type="Pfam" id="PF01725">
    <property type="entry name" value="Ham1p_like"/>
    <property type="match status" value="1"/>
</dbReference>
<dbReference type="SUPFAM" id="SSF52972">
    <property type="entry name" value="ITPase-like"/>
    <property type="match status" value="1"/>
</dbReference>
<organism>
    <name type="scientific">Synechococcus sp. (strain CC9311)</name>
    <dbReference type="NCBI Taxonomy" id="64471"/>
    <lineage>
        <taxon>Bacteria</taxon>
        <taxon>Bacillati</taxon>
        <taxon>Cyanobacteriota</taxon>
        <taxon>Cyanophyceae</taxon>
        <taxon>Synechococcales</taxon>
        <taxon>Synechococcaceae</taxon>
        <taxon>Synechococcus</taxon>
    </lineage>
</organism>
<feature type="chain" id="PRO_1000184584" description="dITP/XTP pyrophosphatase">
    <location>
        <begin position="1"/>
        <end position="206"/>
    </location>
</feature>
<feature type="active site" description="Proton acceptor" evidence="1">
    <location>
        <position position="69"/>
    </location>
</feature>
<feature type="binding site" evidence="1">
    <location>
        <begin position="10"/>
        <end position="15"/>
    </location>
    <ligand>
        <name>substrate</name>
    </ligand>
</feature>
<feature type="binding site" evidence="1">
    <location>
        <position position="40"/>
    </location>
    <ligand>
        <name>Mg(2+)</name>
        <dbReference type="ChEBI" id="CHEBI:18420"/>
    </ligand>
</feature>
<feature type="binding site" evidence="1">
    <location>
        <position position="69"/>
    </location>
    <ligand>
        <name>Mg(2+)</name>
        <dbReference type="ChEBI" id="CHEBI:18420"/>
    </ligand>
</feature>
<feature type="binding site" evidence="1">
    <location>
        <position position="70"/>
    </location>
    <ligand>
        <name>substrate</name>
    </ligand>
</feature>
<feature type="binding site" evidence="1">
    <location>
        <begin position="148"/>
        <end position="151"/>
    </location>
    <ligand>
        <name>substrate</name>
    </ligand>
</feature>
<feature type="binding site" evidence="1">
    <location>
        <position position="171"/>
    </location>
    <ligand>
        <name>substrate</name>
    </ligand>
</feature>
<feature type="binding site" evidence="1">
    <location>
        <begin position="176"/>
        <end position="177"/>
    </location>
    <ligand>
        <name>substrate</name>
    </ligand>
</feature>
<keyword id="KW-0378">Hydrolase</keyword>
<keyword id="KW-0460">Magnesium</keyword>
<keyword id="KW-0479">Metal-binding</keyword>
<keyword id="KW-0546">Nucleotide metabolism</keyword>
<keyword id="KW-0547">Nucleotide-binding</keyword>
<keyword id="KW-1185">Reference proteome</keyword>
<sequence>MTNRVLVIASGNAGKIREFSNLLQELPLQVNPQPDGIQVEETGITFRDNALLKARAVAEATGHWALADDSGLSVDALGGAPGVYSARYANSDPERIERLLKELGDRTDRQARFSAALCIAAPDGSVLAAVEGYCEGSITFSARGTQGFGYDPVFEVKNSGLTFAEMTQDHKKQHGHRGRAFALLKPELEKLLENDPGQDAGATPIP</sequence>
<reference key="1">
    <citation type="journal article" date="2006" name="Proc. Natl. Acad. Sci. U.S.A.">
        <title>Genome sequence of Synechococcus CC9311: insights into adaptation to a coastal environment.</title>
        <authorList>
            <person name="Palenik B."/>
            <person name="Ren Q."/>
            <person name="Dupont C.L."/>
            <person name="Myers G.S."/>
            <person name="Heidelberg J.F."/>
            <person name="Badger J.H."/>
            <person name="Madupu R."/>
            <person name="Nelson W.C."/>
            <person name="Brinkac L.M."/>
            <person name="Dodson R.J."/>
            <person name="Durkin A.S."/>
            <person name="Daugherty S.C."/>
            <person name="Sullivan S.A."/>
            <person name="Khouri H."/>
            <person name="Mohamoud Y."/>
            <person name="Halpin R."/>
            <person name="Paulsen I.T."/>
        </authorList>
    </citation>
    <scope>NUCLEOTIDE SEQUENCE [LARGE SCALE GENOMIC DNA]</scope>
    <source>
        <strain>CC9311</strain>
    </source>
</reference>
<gene>
    <name type="ordered locus">sync_0272</name>
</gene>
<evidence type="ECO:0000255" key="1">
    <source>
        <dbReference type="HAMAP-Rule" id="MF_01405"/>
    </source>
</evidence>
<protein>
    <recommendedName>
        <fullName evidence="1">dITP/XTP pyrophosphatase</fullName>
        <ecNumber evidence="1">3.6.1.66</ecNumber>
    </recommendedName>
    <alternativeName>
        <fullName evidence="1">Non-canonical purine NTP pyrophosphatase</fullName>
    </alternativeName>
    <alternativeName>
        <fullName evidence="1">Non-standard purine NTP pyrophosphatase</fullName>
    </alternativeName>
    <alternativeName>
        <fullName evidence="1">Nucleoside-triphosphate diphosphatase</fullName>
    </alternativeName>
    <alternativeName>
        <fullName evidence="1">Nucleoside-triphosphate pyrophosphatase</fullName>
        <shortName evidence="1">NTPase</shortName>
    </alternativeName>
</protein>
<proteinExistence type="inferred from homology"/>